<proteinExistence type="evidence at transcript level"/>
<dbReference type="EC" id="3.6.4.-"/>
<dbReference type="EMBL" id="AC011806">
    <property type="protein sequence ID" value="AAK53826.1"/>
    <property type="status" value="ALT_SEQ"/>
    <property type="molecule type" value="Genomic_DNA"/>
</dbReference>
<dbReference type="EMBL" id="AP003236">
    <property type="protein sequence ID" value="BAD61441.1"/>
    <property type="molecule type" value="Genomic_DNA"/>
</dbReference>
<dbReference type="EMBL" id="AP003281">
    <property type="protein sequence ID" value="BAB64747.1"/>
    <property type="status" value="ALT_SEQ"/>
    <property type="molecule type" value="Genomic_DNA"/>
</dbReference>
<dbReference type="EMBL" id="AP006530">
    <property type="protein sequence ID" value="BAD88342.1"/>
    <property type="molecule type" value="Genomic_DNA"/>
</dbReference>
<dbReference type="EMBL" id="AP008247">
    <property type="protein sequence ID" value="BAD89475.1"/>
    <property type="molecule type" value="Genomic_DNA"/>
</dbReference>
<dbReference type="EMBL" id="AP008207">
    <property type="protein sequence ID" value="BAF04958.1"/>
    <property type="molecule type" value="Genomic_DNA"/>
</dbReference>
<dbReference type="EMBL" id="AP014957">
    <property type="protein sequence ID" value="BAS72153.1"/>
    <property type="molecule type" value="Genomic_DNA"/>
</dbReference>
<dbReference type="EMBL" id="CM000138">
    <property type="protein sequence ID" value="EEE54577.1"/>
    <property type="molecule type" value="Genomic_DNA"/>
</dbReference>
<dbReference type="EMBL" id="AK105265">
    <property type="protein sequence ID" value="BAG97168.1"/>
    <property type="molecule type" value="mRNA"/>
</dbReference>
<dbReference type="RefSeq" id="XP_015621490.1">
    <property type="nucleotide sequence ID" value="XM_015766004.1"/>
</dbReference>
<dbReference type="SMR" id="Q7G8Y3"/>
<dbReference type="FunCoup" id="Q7G8Y3">
    <property type="interactions" value="2550"/>
</dbReference>
<dbReference type="STRING" id="39947.Q7G8Y3"/>
<dbReference type="PaxDb" id="39947-Q7G8Y3"/>
<dbReference type="EnsemblPlants" id="Os01t0367900-01">
    <property type="protein sequence ID" value="Os01t0367900-01"/>
    <property type="gene ID" value="Os01g0367900"/>
</dbReference>
<dbReference type="Gramene" id="Os01t0367900-01">
    <property type="protein sequence ID" value="Os01t0367900-01"/>
    <property type="gene ID" value="Os01g0367900"/>
</dbReference>
<dbReference type="KEGG" id="dosa:Os01g0367900"/>
<dbReference type="eggNOG" id="KOG0385">
    <property type="taxonomic scope" value="Eukaryota"/>
</dbReference>
<dbReference type="HOGENOM" id="CLU_000315_0_0_1"/>
<dbReference type="InParanoid" id="Q7G8Y3"/>
<dbReference type="OMA" id="PRMDEWQ"/>
<dbReference type="OrthoDB" id="5857104at2759"/>
<dbReference type="Proteomes" id="UP000000763">
    <property type="component" value="Chromosome 1"/>
</dbReference>
<dbReference type="Proteomes" id="UP000007752">
    <property type="component" value="Chromosome 1"/>
</dbReference>
<dbReference type="Proteomes" id="UP000059680">
    <property type="component" value="Chromosome 1"/>
</dbReference>
<dbReference type="GO" id="GO:0000785">
    <property type="term" value="C:chromatin"/>
    <property type="evidence" value="ECO:0000318"/>
    <property type="project" value="GO_Central"/>
</dbReference>
<dbReference type="GO" id="GO:0005634">
    <property type="term" value="C:nucleus"/>
    <property type="evidence" value="ECO:0000318"/>
    <property type="project" value="GO_Central"/>
</dbReference>
<dbReference type="GO" id="GO:0005524">
    <property type="term" value="F:ATP binding"/>
    <property type="evidence" value="ECO:0007669"/>
    <property type="project" value="UniProtKB-KW"/>
</dbReference>
<dbReference type="GO" id="GO:0003682">
    <property type="term" value="F:chromatin binding"/>
    <property type="evidence" value="ECO:0000318"/>
    <property type="project" value="GO_Central"/>
</dbReference>
<dbReference type="GO" id="GO:0003677">
    <property type="term" value="F:DNA binding"/>
    <property type="evidence" value="ECO:0000318"/>
    <property type="project" value="GO_Central"/>
</dbReference>
<dbReference type="GO" id="GO:0004386">
    <property type="term" value="F:helicase activity"/>
    <property type="evidence" value="ECO:0007669"/>
    <property type="project" value="UniProtKB-KW"/>
</dbReference>
<dbReference type="GO" id="GO:0016787">
    <property type="term" value="F:hydrolase activity"/>
    <property type="evidence" value="ECO:0007669"/>
    <property type="project" value="UniProtKB-KW"/>
</dbReference>
<dbReference type="GO" id="GO:0140750">
    <property type="term" value="F:nucleosome array spacer activity"/>
    <property type="evidence" value="ECO:0000318"/>
    <property type="project" value="GO_Central"/>
</dbReference>
<dbReference type="GO" id="GO:0031491">
    <property type="term" value="F:nucleosome binding"/>
    <property type="evidence" value="ECO:0007669"/>
    <property type="project" value="InterPro"/>
</dbReference>
<dbReference type="GO" id="GO:0045944">
    <property type="term" value="P:positive regulation of transcription by RNA polymerase II"/>
    <property type="evidence" value="ECO:0000318"/>
    <property type="project" value="GO_Central"/>
</dbReference>
<dbReference type="CDD" id="cd17997">
    <property type="entry name" value="DEXHc_SMARCA1_SMARCA5"/>
    <property type="match status" value="1"/>
</dbReference>
<dbReference type="CDD" id="cd00167">
    <property type="entry name" value="SANT"/>
    <property type="match status" value="1"/>
</dbReference>
<dbReference type="CDD" id="cd18793">
    <property type="entry name" value="SF2_C_SNF"/>
    <property type="match status" value="1"/>
</dbReference>
<dbReference type="FunFam" id="3.40.50.10810:FF:000028">
    <property type="entry name" value="Chromatin-remodeling complex ATPase"/>
    <property type="match status" value="1"/>
</dbReference>
<dbReference type="FunFam" id="1.10.10.60:FF:000155">
    <property type="entry name" value="ISWI chromatin-remodeling complex ATPase CHR11"/>
    <property type="match status" value="1"/>
</dbReference>
<dbReference type="FunFam" id="1.10.1040.30:FF:000002">
    <property type="entry name" value="ISWI chromatin-remodeling complex ATPase CHR11"/>
    <property type="match status" value="1"/>
</dbReference>
<dbReference type="FunFam" id="3.40.50.300:FF:000519">
    <property type="entry name" value="ISWI chromatin-remodeling complex ATPase CHR11"/>
    <property type="match status" value="1"/>
</dbReference>
<dbReference type="FunFam" id="1.10.10.60:FF:000022">
    <property type="entry name" value="ISWI chromatin-remodeling complex ATPase CHR11 isoform A"/>
    <property type="match status" value="1"/>
</dbReference>
<dbReference type="Gene3D" id="1.10.10.60">
    <property type="entry name" value="Homeodomain-like"/>
    <property type="match status" value="2"/>
</dbReference>
<dbReference type="Gene3D" id="1.20.5.1190">
    <property type="entry name" value="iswi atpase"/>
    <property type="match status" value="1"/>
</dbReference>
<dbReference type="Gene3D" id="1.10.1040.30">
    <property type="entry name" value="ISWI, HAND domain"/>
    <property type="match status" value="1"/>
</dbReference>
<dbReference type="Gene3D" id="3.40.50.300">
    <property type="entry name" value="P-loop containing nucleotide triphosphate hydrolases"/>
    <property type="match status" value="1"/>
</dbReference>
<dbReference type="Gene3D" id="3.40.50.10810">
    <property type="entry name" value="Tandem AAA-ATPase domain"/>
    <property type="match status" value="1"/>
</dbReference>
<dbReference type="InterPro" id="IPR014001">
    <property type="entry name" value="Helicase_ATP-bd"/>
</dbReference>
<dbReference type="InterPro" id="IPR001650">
    <property type="entry name" value="Helicase_C-like"/>
</dbReference>
<dbReference type="InterPro" id="IPR009057">
    <property type="entry name" value="Homeodomain-like_sf"/>
</dbReference>
<dbReference type="InterPro" id="IPR044754">
    <property type="entry name" value="Isw1/2_DEXHc"/>
</dbReference>
<dbReference type="InterPro" id="IPR015194">
    <property type="entry name" value="ISWI_HAND-dom"/>
</dbReference>
<dbReference type="InterPro" id="IPR036306">
    <property type="entry name" value="ISWI_HAND-dom_sf"/>
</dbReference>
<dbReference type="InterPro" id="IPR027417">
    <property type="entry name" value="P-loop_NTPase"/>
</dbReference>
<dbReference type="InterPro" id="IPR001005">
    <property type="entry name" value="SANT/Myb"/>
</dbReference>
<dbReference type="InterPro" id="IPR017884">
    <property type="entry name" value="SANT_dom"/>
</dbReference>
<dbReference type="InterPro" id="IPR015195">
    <property type="entry name" value="SLIDE"/>
</dbReference>
<dbReference type="InterPro" id="IPR038718">
    <property type="entry name" value="SNF2-like_sf"/>
</dbReference>
<dbReference type="InterPro" id="IPR049730">
    <property type="entry name" value="SNF2/RAD54-like_C"/>
</dbReference>
<dbReference type="InterPro" id="IPR000330">
    <property type="entry name" value="SNF2_N"/>
</dbReference>
<dbReference type="PANTHER" id="PTHR45623">
    <property type="entry name" value="CHROMODOMAIN-HELICASE-DNA-BINDING PROTEIN 3-RELATED-RELATED"/>
    <property type="match status" value="1"/>
</dbReference>
<dbReference type="PANTHER" id="PTHR45623:SF49">
    <property type="entry name" value="SWI_SNF-RELATED MATRIX-ASSOCIATED ACTIN-DEPENDENT REGULATOR OF CHROMATIN SUBFAMILY A MEMBER 5"/>
    <property type="match status" value="1"/>
</dbReference>
<dbReference type="Pfam" id="PF09110">
    <property type="entry name" value="HAND"/>
    <property type="match status" value="1"/>
</dbReference>
<dbReference type="Pfam" id="PF00271">
    <property type="entry name" value="Helicase_C"/>
    <property type="match status" value="1"/>
</dbReference>
<dbReference type="Pfam" id="PF09111">
    <property type="entry name" value="SLIDE"/>
    <property type="match status" value="1"/>
</dbReference>
<dbReference type="Pfam" id="PF00176">
    <property type="entry name" value="SNF2-rel_dom"/>
    <property type="match status" value="1"/>
</dbReference>
<dbReference type="SMART" id="SM00487">
    <property type="entry name" value="DEXDc"/>
    <property type="match status" value="1"/>
</dbReference>
<dbReference type="SMART" id="SM00490">
    <property type="entry name" value="HELICc"/>
    <property type="match status" value="1"/>
</dbReference>
<dbReference type="SMART" id="SM00717">
    <property type="entry name" value="SANT"/>
    <property type="match status" value="2"/>
</dbReference>
<dbReference type="SUPFAM" id="SSF101224">
    <property type="entry name" value="HAND domain of the nucleosome remodeling ATPase ISWI"/>
    <property type="match status" value="1"/>
</dbReference>
<dbReference type="SUPFAM" id="SSF46689">
    <property type="entry name" value="Homeodomain-like"/>
    <property type="match status" value="2"/>
</dbReference>
<dbReference type="SUPFAM" id="SSF52540">
    <property type="entry name" value="P-loop containing nucleoside triphosphate hydrolases"/>
    <property type="match status" value="2"/>
</dbReference>
<dbReference type="PROSITE" id="PS51192">
    <property type="entry name" value="HELICASE_ATP_BIND_1"/>
    <property type="match status" value="1"/>
</dbReference>
<dbReference type="PROSITE" id="PS51194">
    <property type="entry name" value="HELICASE_CTER"/>
    <property type="match status" value="1"/>
</dbReference>
<dbReference type="PROSITE" id="PS51293">
    <property type="entry name" value="SANT"/>
    <property type="match status" value="1"/>
</dbReference>
<protein>
    <recommendedName>
        <fullName>Probable chromatin-remodeling complex ATPase chain</fullName>
        <ecNumber>3.6.4.-</ecNumber>
    </recommendedName>
    <alternativeName>
        <fullName>ISW2-like</fullName>
    </alternativeName>
    <alternativeName>
        <fullName>Sucrose nonfermenting protein 2 homolog</fullName>
    </alternativeName>
</protein>
<sequence>MAKPVKYDEEEEEVSSSGEEEEEQSDGAGSGSGEEEDEEEEEAPAAAAGEAAGGEEEEVDEEEIEAVTTGAGADEEEEESGAAAAAPGEGDEESQSTEDDEAVVGEDDDADEAEGGAVVGKREKARLKEMQKLKKQKIQEILDTQNAAVDADMNNKGKGRLKYLLQQTEIFAHFAKGNQSKEKKPRGRGRHASKMTEEEEDEEYLKEEEDALAGSGGTRLLSQPSCIKGKMRDYQLAGLNWLIRLYENGINGILADEMGLGKTLQTISLLGYLHEFRGITGPHMVVAPKSTLGNWIKEIQRFCPILRAVKFLGNPEERNHIRENLLQPGKFDVCVTSFEMAIKEKTTLKRFSWRYIIIDEAHRIKNENSLLSKTMRIYNTNYRLLITGTPLQNNLHELWSLLNFLLPEIFSSAETFDEWFQISGENDQQEVVQQLHKVLRPFLLRRLKSDVEKGLPPKKETILKVGMSQMQKQYYRALLQKDLEVINAGGERKRLLNIAMQLRKCCNHPYLFQGAEPGPPYTTGEHLVENAGKMVLLDKLLPKLKDRDSRVLIFSQMTRLLDILEDYLMYRGYQYCRIDGNTGGEDRDASIEAFNKPGSEKFVFLLSTRAGGLGINLATADVVVLYDSDWNPQADLQAQDRAHRIGQKKEVQVFRFCTEYTIEEKVIERAYKKLALDALVIQQGRLAEQKTVNKDDLLQMVRFGAEMVFSSKDSTITDEDIDRIIAKGEETTAELDAKMKKFTEDAIKFKMDDTAELYDFDDDKEENKLDFKKLVSDNWIEPPRRERKRNYSESEYFKQALRQGAPAKPREPRIPRMPHLHDFQFFNNQRLNELYEKEVRYLMQANQKKDTIDGEDEDQLEPLTAEEQEEKEQLLEEGFATWTRRDFNTFIRACEKYGRNDIRSIAAEMEGKTEEEVQRYAKVFKERYKELSDYDRIIKNIERGEARISRKDEIMRAIGKKLDRYKNPWLELKIQYGQNKGKFYNEECDRFMLCMVHKLGYGNWDELKAAFRMSPLFRFDWFVKSRTTQELARRCDTLIRLVEKENQEYDEQERQARKDKRMAKNMTPTKRSALRVSEGETTPSNSFKRRRQSLMDDYVGSGRRKRG</sequence>
<reference key="1">
    <citation type="submission" date="2001-08" db="EMBL/GenBank/DDBJ databases">
        <title>Genomic sequence for Oryza sativa clone 10P20, Lemont strain, complete sequence.</title>
        <authorList>
            <person name="Huang E.N."/>
            <person name="de la Bastide M."/>
            <person name="Vil D.M."/>
            <person name="Preston R.R."/>
            <person name="Spiegel L.A."/>
            <person name="See L.H."/>
            <person name="Shah R."/>
            <person name="Matero A."/>
            <person name="O'Shaughnessy A."/>
            <person name="Rodriguez M."/>
            <person name="Shekher M."/>
            <person name="Swaby I."/>
            <person name="Schutz K."/>
            <person name="Habermann K."/>
            <person name="Parnell L.D."/>
            <person name="Nascimento L.U."/>
            <person name="Dedhia N.N."/>
            <person name="McCombie W.R."/>
        </authorList>
    </citation>
    <scope>NUCLEOTIDE SEQUENCE [GENOMIC DNA]</scope>
    <source>
        <strain>cv. Lemont</strain>
    </source>
</reference>
<reference key="2">
    <citation type="journal article" date="2002" name="Nature">
        <title>The genome sequence and structure of rice chromosome 1.</title>
        <authorList>
            <person name="Sasaki T."/>
            <person name="Matsumoto T."/>
            <person name="Yamamoto K."/>
            <person name="Sakata K."/>
            <person name="Baba T."/>
            <person name="Katayose Y."/>
            <person name="Wu J."/>
            <person name="Niimura Y."/>
            <person name="Cheng Z."/>
            <person name="Nagamura Y."/>
            <person name="Antonio B.A."/>
            <person name="Kanamori H."/>
            <person name="Hosokawa S."/>
            <person name="Masukawa M."/>
            <person name="Arikawa K."/>
            <person name="Chiden Y."/>
            <person name="Hayashi M."/>
            <person name="Okamoto M."/>
            <person name="Ando T."/>
            <person name="Aoki H."/>
            <person name="Arita K."/>
            <person name="Hamada M."/>
            <person name="Harada C."/>
            <person name="Hijishita S."/>
            <person name="Honda M."/>
            <person name="Ichikawa Y."/>
            <person name="Idonuma A."/>
            <person name="Iijima M."/>
            <person name="Ikeda M."/>
            <person name="Ikeno M."/>
            <person name="Ito S."/>
            <person name="Ito T."/>
            <person name="Ito Y."/>
            <person name="Ito Y."/>
            <person name="Iwabuchi A."/>
            <person name="Kamiya K."/>
            <person name="Karasawa W."/>
            <person name="Katagiri S."/>
            <person name="Kikuta A."/>
            <person name="Kobayashi N."/>
            <person name="Kono I."/>
            <person name="Machita K."/>
            <person name="Maehara T."/>
            <person name="Mizuno H."/>
            <person name="Mizubayashi T."/>
            <person name="Mukai Y."/>
            <person name="Nagasaki H."/>
            <person name="Nakashima M."/>
            <person name="Nakama Y."/>
            <person name="Nakamichi Y."/>
            <person name="Nakamura M."/>
            <person name="Namiki N."/>
            <person name="Negishi M."/>
            <person name="Ohta I."/>
            <person name="Ono N."/>
            <person name="Saji S."/>
            <person name="Sakai K."/>
            <person name="Shibata M."/>
            <person name="Shimokawa T."/>
            <person name="Shomura A."/>
            <person name="Song J."/>
            <person name="Takazaki Y."/>
            <person name="Terasawa K."/>
            <person name="Tsuji K."/>
            <person name="Waki K."/>
            <person name="Yamagata H."/>
            <person name="Yamane H."/>
            <person name="Yoshiki S."/>
            <person name="Yoshihara R."/>
            <person name="Yukawa K."/>
            <person name="Zhong H."/>
            <person name="Iwama H."/>
            <person name="Endo T."/>
            <person name="Ito H."/>
            <person name="Hahn J.H."/>
            <person name="Kim H.-I."/>
            <person name="Eun M.-Y."/>
            <person name="Yano M."/>
            <person name="Jiang J."/>
            <person name="Gojobori T."/>
        </authorList>
    </citation>
    <scope>NUCLEOTIDE SEQUENCE [LARGE SCALE GENOMIC DNA]</scope>
    <source>
        <strain>cv. Nipponbare</strain>
    </source>
</reference>
<reference key="3">
    <citation type="journal article" date="2005" name="Nature">
        <title>The map-based sequence of the rice genome.</title>
        <authorList>
            <consortium name="International rice genome sequencing project (IRGSP)"/>
        </authorList>
    </citation>
    <scope>NUCLEOTIDE SEQUENCE [LARGE SCALE GENOMIC DNA]</scope>
    <source>
        <strain>cv. Nipponbare</strain>
    </source>
</reference>
<reference key="4">
    <citation type="journal article" date="2008" name="Nucleic Acids Res.">
        <title>The rice annotation project database (RAP-DB): 2008 update.</title>
        <authorList>
            <consortium name="The rice annotation project (RAP)"/>
        </authorList>
    </citation>
    <scope>GENOME REANNOTATION</scope>
    <source>
        <strain>cv. Nipponbare</strain>
    </source>
</reference>
<reference key="5">
    <citation type="journal article" date="2013" name="Rice">
        <title>Improvement of the Oryza sativa Nipponbare reference genome using next generation sequence and optical map data.</title>
        <authorList>
            <person name="Kawahara Y."/>
            <person name="de la Bastide M."/>
            <person name="Hamilton J.P."/>
            <person name="Kanamori H."/>
            <person name="McCombie W.R."/>
            <person name="Ouyang S."/>
            <person name="Schwartz D.C."/>
            <person name="Tanaka T."/>
            <person name="Wu J."/>
            <person name="Zhou S."/>
            <person name="Childs K.L."/>
            <person name="Davidson R.M."/>
            <person name="Lin H."/>
            <person name="Quesada-Ocampo L."/>
            <person name="Vaillancourt B."/>
            <person name="Sakai H."/>
            <person name="Lee S.S."/>
            <person name="Kim J."/>
            <person name="Numa H."/>
            <person name="Itoh T."/>
            <person name="Buell C.R."/>
            <person name="Matsumoto T."/>
        </authorList>
    </citation>
    <scope>GENOME REANNOTATION</scope>
    <source>
        <strain>cv. Nipponbare</strain>
    </source>
</reference>
<reference key="6">
    <citation type="journal article" date="2005" name="PLoS Biol.">
        <title>The genomes of Oryza sativa: a history of duplications.</title>
        <authorList>
            <person name="Yu J."/>
            <person name="Wang J."/>
            <person name="Lin W."/>
            <person name="Li S."/>
            <person name="Li H."/>
            <person name="Zhou J."/>
            <person name="Ni P."/>
            <person name="Dong W."/>
            <person name="Hu S."/>
            <person name="Zeng C."/>
            <person name="Zhang J."/>
            <person name="Zhang Y."/>
            <person name="Li R."/>
            <person name="Xu Z."/>
            <person name="Li S."/>
            <person name="Li X."/>
            <person name="Zheng H."/>
            <person name="Cong L."/>
            <person name="Lin L."/>
            <person name="Yin J."/>
            <person name="Geng J."/>
            <person name="Li G."/>
            <person name="Shi J."/>
            <person name="Liu J."/>
            <person name="Lv H."/>
            <person name="Li J."/>
            <person name="Wang J."/>
            <person name="Deng Y."/>
            <person name="Ran L."/>
            <person name="Shi X."/>
            <person name="Wang X."/>
            <person name="Wu Q."/>
            <person name="Li C."/>
            <person name="Ren X."/>
            <person name="Wang J."/>
            <person name="Wang X."/>
            <person name="Li D."/>
            <person name="Liu D."/>
            <person name="Zhang X."/>
            <person name="Ji Z."/>
            <person name="Zhao W."/>
            <person name="Sun Y."/>
            <person name="Zhang Z."/>
            <person name="Bao J."/>
            <person name="Han Y."/>
            <person name="Dong L."/>
            <person name="Ji J."/>
            <person name="Chen P."/>
            <person name="Wu S."/>
            <person name="Liu J."/>
            <person name="Xiao Y."/>
            <person name="Bu D."/>
            <person name="Tan J."/>
            <person name="Yang L."/>
            <person name="Ye C."/>
            <person name="Zhang J."/>
            <person name="Xu J."/>
            <person name="Zhou Y."/>
            <person name="Yu Y."/>
            <person name="Zhang B."/>
            <person name="Zhuang S."/>
            <person name="Wei H."/>
            <person name="Liu B."/>
            <person name="Lei M."/>
            <person name="Yu H."/>
            <person name="Li Y."/>
            <person name="Xu H."/>
            <person name="Wei S."/>
            <person name="He X."/>
            <person name="Fang L."/>
            <person name="Zhang Z."/>
            <person name="Zhang Y."/>
            <person name="Huang X."/>
            <person name="Su Z."/>
            <person name="Tong W."/>
            <person name="Li J."/>
            <person name="Tong Z."/>
            <person name="Li S."/>
            <person name="Ye J."/>
            <person name="Wang L."/>
            <person name="Fang L."/>
            <person name="Lei T."/>
            <person name="Chen C.-S."/>
            <person name="Chen H.-C."/>
            <person name="Xu Z."/>
            <person name="Li H."/>
            <person name="Huang H."/>
            <person name="Zhang F."/>
            <person name="Xu H."/>
            <person name="Li N."/>
            <person name="Zhao C."/>
            <person name="Li S."/>
            <person name="Dong L."/>
            <person name="Huang Y."/>
            <person name="Li L."/>
            <person name="Xi Y."/>
            <person name="Qi Q."/>
            <person name="Li W."/>
            <person name="Zhang B."/>
            <person name="Hu W."/>
            <person name="Zhang Y."/>
            <person name="Tian X."/>
            <person name="Jiao Y."/>
            <person name="Liang X."/>
            <person name="Jin J."/>
            <person name="Gao L."/>
            <person name="Zheng W."/>
            <person name="Hao B."/>
            <person name="Liu S.-M."/>
            <person name="Wang W."/>
            <person name="Yuan L."/>
            <person name="Cao M."/>
            <person name="McDermott J."/>
            <person name="Samudrala R."/>
            <person name="Wang J."/>
            <person name="Wong G.K.-S."/>
            <person name="Yang H."/>
        </authorList>
    </citation>
    <scope>NUCLEOTIDE SEQUENCE [LARGE SCALE GENOMIC DNA]</scope>
    <source>
        <strain>cv. Nipponbare</strain>
    </source>
</reference>
<reference key="7">
    <citation type="journal article" date="2003" name="Science">
        <title>Collection, mapping, and annotation of over 28,000 cDNA clones from japonica rice.</title>
        <authorList>
            <consortium name="The rice full-length cDNA consortium"/>
        </authorList>
    </citation>
    <scope>NUCLEOTIDE SEQUENCE [LARGE SCALE MRNA]</scope>
    <source>
        <strain>cv. Nipponbare</strain>
    </source>
</reference>
<organism>
    <name type="scientific">Oryza sativa subsp. japonica</name>
    <name type="common">Rice</name>
    <dbReference type="NCBI Taxonomy" id="39947"/>
    <lineage>
        <taxon>Eukaryota</taxon>
        <taxon>Viridiplantae</taxon>
        <taxon>Streptophyta</taxon>
        <taxon>Embryophyta</taxon>
        <taxon>Tracheophyta</taxon>
        <taxon>Spermatophyta</taxon>
        <taxon>Magnoliopsida</taxon>
        <taxon>Liliopsida</taxon>
        <taxon>Poales</taxon>
        <taxon>Poaceae</taxon>
        <taxon>BOP clade</taxon>
        <taxon>Oryzoideae</taxon>
        <taxon>Oryzeae</taxon>
        <taxon>Oryzinae</taxon>
        <taxon>Oryza</taxon>
        <taxon>Oryza sativa</taxon>
    </lineage>
</organism>
<name>ISW2_ORYSJ</name>
<accession>Q7G8Y3</accession>
<accession>B7EXS1</accession>
<accession>Q0JMS0</accession>
<accession>Q5JJL5</accession>
<accession>Q5ZC99</accession>
<accession>Q93VU7</accession>
<keyword id="KW-0067">ATP-binding</keyword>
<keyword id="KW-0156">Chromatin regulator</keyword>
<keyword id="KW-0175">Coiled coil</keyword>
<keyword id="KW-0347">Helicase</keyword>
<keyword id="KW-0378">Hydrolase</keyword>
<keyword id="KW-0547">Nucleotide-binding</keyword>
<keyword id="KW-0539">Nucleus</keyword>
<keyword id="KW-1185">Reference proteome</keyword>
<keyword id="KW-0677">Repeat</keyword>
<evidence type="ECO:0000250" key="1"/>
<evidence type="ECO:0000255" key="2"/>
<evidence type="ECO:0000255" key="3">
    <source>
        <dbReference type="PROSITE-ProRule" id="PRU00541"/>
    </source>
</evidence>
<evidence type="ECO:0000255" key="4">
    <source>
        <dbReference type="PROSITE-ProRule" id="PRU00542"/>
    </source>
</evidence>
<evidence type="ECO:0000255" key="5">
    <source>
        <dbReference type="PROSITE-ProRule" id="PRU00624"/>
    </source>
</evidence>
<evidence type="ECO:0000256" key="6">
    <source>
        <dbReference type="SAM" id="MobiDB-lite"/>
    </source>
</evidence>
<evidence type="ECO:0000305" key="7"/>
<evidence type="ECO:0000312" key="8">
    <source>
        <dbReference type="EMBL" id="EEE54577.1"/>
    </source>
</evidence>
<comment type="function">
    <text evidence="1">Possesses intrinsic ATP-dependent nucleosome-remodeling activity. Constitutes the catalytic subunit of several complexes capable of forming ordered nucleosome arrays on chromatin in vitro (By similarity).</text>
</comment>
<comment type="subcellular location">
    <subcellularLocation>
        <location evidence="5">Nucleus</location>
    </subcellularLocation>
</comment>
<comment type="similarity">
    <text evidence="7">Belongs to the SNF2/RAD54 helicase family. ISWI subfamily.</text>
</comment>
<comment type="sequence caution" evidence="7">
    <conflict type="erroneous gene model prediction">
        <sequence resource="EMBL-CDS" id="AAK53826"/>
    </conflict>
</comment>
<comment type="sequence caution" evidence="7">
    <conflict type="erroneous gene model prediction">
        <sequence resource="EMBL-CDS" id="BAB64747"/>
    </conflict>
</comment>
<gene>
    <name type="ordered locus">Os01g0367900</name>
    <name type="ordered locus">LOC_Os01g27040</name>
    <name type="ORF">B1329D01.23</name>
    <name evidence="8" type="ORF">OsJ_01780</name>
    <name type="ORF">P0043B10.9</name>
    <name type="ORF">P0560B06.13</name>
    <name type="ORF">P0784G04.20</name>
</gene>
<feature type="chain" id="PRO_0000074332" description="Probable chromatin-remodeling complex ATPase chain">
    <location>
        <begin position="1"/>
        <end position="1107"/>
    </location>
</feature>
<feature type="domain" description="Helicase ATP-binding" evidence="3">
    <location>
        <begin position="243"/>
        <end position="408"/>
    </location>
</feature>
<feature type="domain" description="Helicase C-terminal" evidence="4">
    <location>
        <begin position="536"/>
        <end position="687"/>
    </location>
</feature>
<feature type="domain" description="SANT 1" evidence="5">
    <location>
        <begin position="877"/>
        <end position="929"/>
    </location>
</feature>
<feature type="domain" description="SANT 2" evidence="5">
    <location>
        <begin position="978"/>
        <end position="1039"/>
    </location>
</feature>
<feature type="region of interest" description="Disordered" evidence="6">
    <location>
        <begin position="1"/>
        <end position="124"/>
    </location>
</feature>
<feature type="region of interest" description="Disordered" evidence="6">
    <location>
        <begin position="177"/>
        <end position="217"/>
    </location>
</feature>
<feature type="region of interest" description="Disordered" evidence="6">
    <location>
        <begin position="1049"/>
        <end position="1107"/>
    </location>
</feature>
<feature type="coiled-coil region" evidence="2">
    <location>
        <begin position="121"/>
        <end position="147"/>
    </location>
</feature>
<feature type="coiled-coil region" evidence="2">
    <location>
        <begin position="1029"/>
        <end position="1067"/>
    </location>
</feature>
<feature type="short sequence motif" description="DEAH box">
    <location>
        <begin position="359"/>
        <end position="362"/>
    </location>
</feature>
<feature type="compositionally biased region" description="Acidic residues" evidence="6">
    <location>
        <begin position="8"/>
        <end position="25"/>
    </location>
</feature>
<feature type="compositionally biased region" description="Acidic residues" evidence="6">
    <location>
        <begin position="33"/>
        <end position="43"/>
    </location>
</feature>
<feature type="compositionally biased region" description="Acidic residues" evidence="6">
    <location>
        <begin position="53"/>
        <end position="65"/>
    </location>
</feature>
<feature type="compositionally biased region" description="Acidic residues" evidence="6">
    <location>
        <begin position="89"/>
        <end position="114"/>
    </location>
</feature>
<feature type="compositionally biased region" description="Basic residues" evidence="6">
    <location>
        <begin position="183"/>
        <end position="193"/>
    </location>
</feature>
<feature type="compositionally biased region" description="Acidic residues" evidence="6">
    <location>
        <begin position="197"/>
        <end position="211"/>
    </location>
</feature>
<feature type="binding site" evidence="3">
    <location>
        <begin position="256"/>
        <end position="263"/>
    </location>
    <ligand>
        <name>ATP</name>
        <dbReference type="ChEBI" id="CHEBI:30616"/>
    </ligand>
</feature>